<comment type="function">
    <text evidence="1">Endoribonuclease that initiates mRNA decay.</text>
</comment>
<comment type="subcellular location">
    <subcellularLocation>
        <location evidence="1">Cell membrane</location>
        <topology evidence="1">Single-pass membrane protein</topology>
    </subcellularLocation>
</comment>
<comment type="similarity">
    <text evidence="1">Belongs to the RNase Y family.</text>
</comment>
<dbReference type="EC" id="3.1.-.-" evidence="1"/>
<dbReference type="EMBL" id="CP000419">
    <property type="protein sequence ID" value="ABJ65729.1"/>
    <property type="molecule type" value="Genomic_DNA"/>
</dbReference>
<dbReference type="SMR" id="Q03M43"/>
<dbReference type="KEGG" id="ste:STER_0442"/>
<dbReference type="HOGENOM" id="CLU_028328_1_0_9"/>
<dbReference type="GO" id="GO:0005886">
    <property type="term" value="C:plasma membrane"/>
    <property type="evidence" value="ECO:0007669"/>
    <property type="project" value="UniProtKB-SubCell"/>
</dbReference>
<dbReference type="GO" id="GO:0003723">
    <property type="term" value="F:RNA binding"/>
    <property type="evidence" value="ECO:0007669"/>
    <property type="project" value="UniProtKB-UniRule"/>
</dbReference>
<dbReference type="GO" id="GO:0004521">
    <property type="term" value="F:RNA endonuclease activity"/>
    <property type="evidence" value="ECO:0007669"/>
    <property type="project" value="UniProtKB-UniRule"/>
</dbReference>
<dbReference type="GO" id="GO:0006402">
    <property type="term" value="P:mRNA catabolic process"/>
    <property type="evidence" value="ECO:0007669"/>
    <property type="project" value="UniProtKB-UniRule"/>
</dbReference>
<dbReference type="CDD" id="cd00077">
    <property type="entry name" value="HDc"/>
    <property type="match status" value="1"/>
</dbReference>
<dbReference type="CDD" id="cd22431">
    <property type="entry name" value="KH-I_RNaseY"/>
    <property type="match status" value="1"/>
</dbReference>
<dbReference type="FunFam" id="1.10.3210.10:FF:000003">
    <property type="entry name" value="Ribonuclease Y"/>
    <property type="match status" value="1"/>
</dbReference>
<dbReference type="FunFam" id="3.30.1370.10:FF:000006">
    <property type="entry name" value="Ribonuclease Y"/>
    <property type="match status" value="1"/>
</dbReference>
<dbReference type="Gene3D" id="1.10.3210.10">
    <property type="entry name" value="Hypothetical protein af1432"/>
    <property type="match status" value="1"/>
</dbReference>
<dbReference type="Gene3D" id="3.30.1370.10">
    <property type="entry name" value="K Homology domain, type 1"/>
    <property type="match status" value="1"/>
</dbReference>
<dbReference type="HAMAP" id="MF_00335">
    <property type="entry name" value="RNase_Y"/>
    <property type="match status" value="1"/>
</dbReference>
<dbReference type="InterPro" id="IPR003607">
    <property type="entry name" value="HD/PDEase_dom"/>
</dbReference>
<dbReference type="InterPro" id="IPR006674">
    <property type="entry name" value="HD_domain"/>
</dbReference>
<dbReference type="InterPro" id="IPR006675">
    <property type="entry name" value="HDIG_dom"/>
</dbReference>
<dbReference type="InterPro" id="IPR004087">
    <property type="entry name" value="KH_dom"/>
</dbReference>
<dbReference type="InterPro" id="IPR004088">
    <property type="entry name" value="KH_dom_type_1"/>
</dbReference>
<dbReference type="InterPro" id="IPR036612">
    <property type="entry name" value="KH_dom_type_1_sf"/>
</dbReference>
<dbReference type="InterPro" id="IPR017705">
    <property type="entry name" value="Ribonuclease_Y"/>
</dbReference>
<dbReference type="InterPro" id="IPR022711">
    <property type="entry name" value="RNase_Y_N"/>
</dbReference>
<dbReference type="NCBIfam" id="TIGR00277">
    <property type="entry name" value="HDIG"/>
    <property type="match status" value="1"/>
</dbReference>
<dbReference type="NCBIfam" id="NF000997">
    <property type="entry name" value="PRK00106.1"/>
    <property type="match status" value="1"/>
</dbReference>
<dbReference type="NCBIfam" id="TIGR03319">
    <property type="entry name" value="RNase_Y"/>
    <property type="match status" value="1"/>
</dbReference>
<dbReference type="PANTHER" id="PTHR12826">
    <property type="entry name" value="RIBONUCLEASE Y"/>
    <property type="match status" value="1"/>
</dbReference>
<dbReference type="PANTHER" id="PTHR12826:SF15">
    <property type="entry name" value="RIBONUCLEASE Y"/>
    <property type="match status" value="1"/>
</dbReference>
<dbReference type="Pfam" id="PF01966">
    <property type="entry name" value="HD"/>
    <property type="match status" value="1"/>
</dbReference>
<dbReference type="Pfam" id="PF00013">
    <property type="entry name" value="KH_1"/>
    <property type="match status" value="1"/>
</dbReference>
<dbReference type="Pfam" id="PF12072">
    <property type="entry name" value="RNase_Y_N"/>
    <property type="match status" value="1"/>
</dbReference>
<dbReference type="SMART" id="SM00471">
    <property type="entry name" value="HDc"/>
    <property type="match status" value="1"/>
</dbReference>
<dbReference type="SMART" id="SM00322">
    <property type="entry name" value="KH"/>
    <property type="match status" value="1"/>
</dbReference>
<dbReference type="SUPFAM" id="SSF54791">
    <property type="entry name" value="Eukaryotic type KH-domain (KH-domain type I)"/>
    <property type="match status" value="1"/>
</dbReference>
<dbReference type="SUPFAM" id="SSF109604">
    <property type="entry name" value="HD-domain/PDEase-like"/>
    <property type="match status" value="1"/>
</dbReference>
<dbReference type="PROSITE" id="PS51831">
    <property type="entry name" value="HD"/>
    <property type="match status" value="1"/>
</dbReference>
<dbReference type="PROSITE" id="PS50084">
    <property type="entry name" value="KH_TYPE_1"/>
    <property type="match status" value="1"/>
</dbReference>
<sequence length="532" mass="60020">MIILVVFALIGLVVGYLAISIKLSKAKEQAETILLKAEQDAVNLRSQAEHDADHLRVTAERESKAQRKELLLEAKEKARKYREDIEEEFKSERQELKQMENRLTERATSLDRKDENLSSKELALEKKEQSLADKSKHLNEREENVAQLEAEKQAELERIGQMTIAEAREVILTETENNLTHEIATRIKDAEAQIKDTVDKKAKNLLAQAMQRLSGDYVTEQTVTTVHLPDDNMKGRIIGREGRNIRTLESLTGIDVIIDDTPEVVVLSGFDPVRREIARMTLEALIKDGRIHPARIEELVEKSRKEMDNRIREYGEEAAYEIGAMNLHPDLIKIMGRLQFRTSYGQNVLRHSVEVGKLAGIMASELGENVALARRAGFLHDMGKAIDKEVEGSHVEIGTEFARKYKEHPVVVNAIASHHGDVEPESVIAVIVAAADALSSARPGARNESVENYVKRLRDLEEIASSFDGVQTSFALQAGREIRIMVHPNKISDDEVTILSHKIREQIEKNLDYPGNIKVTVIREFRAVDYAK</sequence>
<accession>Q03M43</accession>
<reference key="1">
    <citation type="journal article" date="2006" name="Proc. Natl. Acad. Sci. U.S.A.">
        <title>Comparative genomics of the lactic acid bacteria.</title>
        <authorList>
            <person name="Makarova K.S."/>
            <person name="Slesarev A."/>
            <person name="Wolf Y.I."/>
            <person name="Sorokin A."/>
            <person name="Mirkin B."/>
            <person name="Koonin E.V."/>
            <person name="Pavlov A."/>
            <person name="Pavlova N."/>
            <person name="Karamychev V."/>
            <person name="Polouchine N."/>
            <person name="Shakhova V."/>
            <person name="Grigoriev I."/>
            <person name="Lou Y."/>
            <person name="Rohksar D."/>
            <person name="Lucas S."/>
            <person name="Huang K."/>
            <person name="Goodstein D.M."/>
            <person name="Hawkins T."/>
            <person name="Plengvidhya V."/>
            <person name="Welker D."/>
            <person name="Hughes J."/>
            <person name="Goh Y."/>
            <person name="Benson A."/>
            <person name="Baldwin K."/>
            <person name="Lee J.-H."/>
            <person name="Diaz-Muniz I."/>
            <person name="Dosti B."/>
            <person name="Smeianov V."/>
            <person name="Wechter W."/>
            <person name="Barabote R."/>
            <person name="Lorca G."/>
            <person name="Altermann E."/>
            <person name="Barrangou R."/>
            <person name="Ganesan B."/>
            <person name="Xie Y."/>
            <person name="Rawsthorne H."/>
            <person name="Tamir D."/>
            <person name="Parker C."/>
            <person name="Breidt F."/>
            <person name="Broadbent J.R."/>
            <person name="Hutkins R."/>
            <person name="O'Sullivan D."/>
            <person name="Steele J."/>
            <person name="Unlu G."/>
            <person name="Saier M.H. Jr."/>
            <person name="Klaenhammer T."/>
            <person name="Richardson P."/>
            <person name="Kozyavkin S."/>
            <person name="Weimer B.C."/>
            <person name="Mills D.A."/>
        </authorList>
    </citation>
    <scope>NUCLEOTIDE SEQUENCE [LARGE SCALE GENOMIC DNA]</scope>
    <source>
        <strain>ATCC BAA-491 / LMD-9</strain>
    </source>
</reference>
<feature type="chain" id="PRO_0000344953" description="Ribonuclease Y">
    <location>
        <begin position="1"/>
        <end position="532"/>
    </location>
</feature>
<feature type="transmembrane region" description="Helical" evidence="1">
    <location>
        <begin position="1"/>
        <end position="21"/>
    </location>
</feature>
<feature type="domain" description="KH" evidence="1">
    <location>
        <begin position="222"/>
        <end position="282"/>
    </location>
</feature>
<feature type="domain" description="HD" evidence="2">
    <location>
        <begin position="348"/>
        <end position="441"/>
    </location>
</feature>
<feature type="region of interest" description="Disordered" evidence="3">
    <location>
        <begin position="101"/>
        <end position="139"/>
    </location>
</feature>
<gene>
    <name evidence="1" type="primary">rny</name>
    <name type="ordered locus">STER_0442</name>
</gene>
<protein>
    <recommendedName>
        <fullName evidence="1">Ribonuclease Y</fullName>
        <shortName evidence="1">RNase Y</shortName>
        <ecNumber evidence="1">3.1.-.-</ecNumber>
    </recommendedName>
</protein>
<evidence type="ECO:0000255" key="1">
    <source>
        <dbReference type="HAMAP-Rule" id="MF_00335"/>
    </source>
</evidence>
<evidence type="ECO:0000255" key="2">
    <source>
        <dbReference type="PROSITE-ProRule" id="PRU01175"/>
    </source>
</evidence>
<evidence type="ECO:0000256" key="3">
    <source>
        <dbReference type="SAM" id="MobiDB-lite"/>
    </source>
</evidence>
<name>RNY_STRTD</name>
<keyword id="KW-1003">Cell membrane</keyword>
<keyword id="KW-0255">Endonuclease</keyword>
<keyword id="KW-0378">Hydrolase</keyword>
<keyword id="KW-0472">Membrane</keyword>
<keyword id="KW-0540">Nuclease</keyword>
<keyword id="KW-0694">RNA-binding</keyword>
<keyword id="KW-0812">Transmembrane</keyword>
<keyword id="KW-1133">Transmembrane helix</keyword>
<organism>
    <name type="scientific">Streptococcus thermophilus (strain ATCC BAA-491 / LMD-9)</name>
    <dbReference type="NCBI Taxonomy" id="322159"/>
    <lineage>
        <taxon>Bacteria</taxon>
        <taxon>Bacillati</taxon>
        <taxon>Bacillota</taxon>
        <taxon>Bacilli</taxon>
        <taxon>Lactobacillales</taxon>
        <taxon>Streptococcaceae</taxon>
        <taxon>Streptococcus</taxon>
    </lineage>
</organism>
<proteinExistence type="inferred from homology"/>